<reference key="1">
    <citation type="journal article" date="1992" name="Virology">
        <title>Channel catfish virus: a new type of herpesvirus.</title>
        <authorList>
            <person name="Davison A.J."/>
        </authorList>
    </citation>
    <scope>NUCLEOTIDE SEQUENCE [LARGE SCALE GENOMIC DNA]</scope>
</reference>
<reference key="2">
    <citation type="submission" date="2013-07" db="EMBL/GenBank/DDBJ databases">
        <authorList>
            <person name="Davison A.J."/>
        </authorList>
    </citation>
    <scope>SEQUENCE REVISION TO 226</scope>
</reference>
<feature type="chain" id="PRO_0000222130" description="Uncharacterized protein ORF50">
    <location>
        <begin position="1"/>
        <end position="670"/>
    </location>
</feature>
<feature type="repeat" description="1">
    <location>
        <begin position="143"/>
        <end position="158"/>
    </location>
</feature>
<feature type="repeat" description="2">
    <location>
        <begin position="171"/>
        <end position="186"/>
    </location>
</feature>
<feature type="repeat" description="3">
    <location>
        <begin position="200"/>
        <end position="214"/>
    </location>
</feature>
<feature type="repeat" description="4">
    <location>
        <begin position="215"/>
        <end position="233"/>
    </location>
</feature>
<feature type="repeat" description="5">
    <location>
        <begin position="234"/>
        <end position="252"/>
    </location>
</feature>
<feature type="repeat" description="6">
    <location>
        <begin position="253"/>
        <end position="268"/>
    </location>
</feature>
<feature type="repeat" description="7">
    <location>
        <begin position="279"/>
        <end position="293"/>
    </location>
</feature>
<feature type="repeat" description="8">
    <location>
        <begin position="294"/>
        <end position="309"/>
    </location>
</feature>
<feature type="repeat" description="9">
    <location>
        <begin position="320"/>
        <end position="334"/>
    </location>
</feature>
<feature type="repeat" description="10">
    <location>
        <begin position="335"/>
        <end position="349"/>
    </location>
</feature>
<feature type="repeat" description="11">
    <location>
        <begin position="362"/>
        <end position="376"/>
    </location>
</feature>
<feature type="repeat" description="12">
    <location>
        <begin position="377"/>
        <end position="391"/>
    </location>
</feature>
<feature type="repeat" description="13">
    <location>
        <begin position="392"/>
        <end position="406"/>
    </location>
</feature>
<feature type="repeat" description="14">
    <location>
        <begin position="407"/>
        <end position="421"/>
    </location>
</feature>
<feature type="repeat" description="15">
    <location>
        <begin position="422"/>
        <end position="436"/>
    </location>
</feature>
<feature type="repeat" description="16">
    <location>
        <begin position="437"/>
        <end position="452"/>
    </location>
</feature>
<feature type="repeat" description="17">
    <location>
        <begin position="464"/>
        <end position="477"/>
    </location>
</feature>
<feature type="repeat" description="18">
    <location>
        <begin position="478"/>
        <end position="493"/>
    </location>
</feature>
<feature type="repeat" description="19">
    <location>
        <begin position="504"/>
        <end position="517"/>
    </location>
</feature>
<feature type="repeat" description="20">
    <location>
        <begin position="518"/>
        <end position="531"/>
    </location>
</feature>
<feature type="repeat" description="21">
    <location>
        <begin position="532"/>
        <end position="545"/>
    </location>
</feature>
<feature type="repeat" description="22">
    <location>
        <begin position="546"/>
        <end position="559"/>
    </location>
</feature>
<feature type="repeat" description="23">
    <location>
        <begin position="560"/>
        <end position="573"/>
    </location>
</feature>
<feature type="repeat" description="24">
    <location>
        <begin position="574"/>
        <end position="587"/>
    </location>
</feature>
<feature type="repeat" description="25">
    <location>
        <begin position="588"/>
        <end position="601"/>
    </location>
</feature>
<feature type="repeat" description="26">
    <location>
        <begin position="602"/>
        <end position="615"/>
    </location>
</feature>
<feature type="repeat" description="27">
    <location>
        <begin position="616"/>
        <end position="629"/>
    </location>
</feature>
<feature type="region of interest" description="Disordered" evidence="1">
    <location>
        <begin position="53"/>
        <end position="83"/>
    </location>
</feature>
<feature type="region of interest" description="Disordered" evidence="1">
    <location>
        <begin position="187"/>
        <end position="225"/>
    </location>
</feature>
<feature type="region of interest" description="Disordered" evidence="1">
    <location>
        <begin position="339"/>
        <end position="395"/>
    </location>
</feature>
<feature type="region of interest" description="Disordered" evidence="1">
    <location>
        <begin position="471"/>
        <end position="503"/>
    </location>
</feature>
<feature type="region of interest" description="Disordered" evidence="1">
    <location>
        <begin position="525"/>
        <end position="670"/>
    </location>
</feature>
<feature type="compositionally biased region" description="Low complexity" evidence="1">
    <location>
        <begin position="205"/>
        <end position="225"/>
    </location>
</feature>
<feature type="compositionally biased region" description="Polar residues" evidence="1">
    <location>
        <begin position="342"/>
        <end position="362"/>
    </location>
</feature>
<feature type="compositionally biased region" description="Low complexity" evidence="1">
    <location>
        <begin position="363"/>
        <end position="395"/>
    </location>
</feature>
<feature type="compositionally biased region" description="Low complexity" evidence="1">
    <location>
        <begin position="471"/>
        <end position="482"/>
    </location>
</feature>
<feature type="compositionally biased region" description="Low complexity" evidence="1">
    <location>
        <begin position="490"/>
        <end position="503"/>
    </location>
</feature>
<feature type="compositionally biased region" description="Low complexity" evidence="1">
    <location>
        <begin position="525"/>
        <end position="634"/>
    </location>
</feature>
<feature type="compositionally biased region" description="Basic residues" evidence="1">
    <location>
        <begin position="638"/>
        <end position="654"/>
    </location>
</feature>
<protein>
    <recommendedName>
        <fullName>Uncharacterized protein ORF50</fullName>
    </recommendedName>
</protein>
<organism>
    <name type="scientific">Ictalurid herpesvirus 1 (strain Auburn)</name>
    <name type="common">IcHV-1</name>
    <name type="synonym">Channel catfish herpesvirus</name>
    <dbReference type="NCBI Taxonomy" id="766178"/>
    <lineage>
        <taxon>Viruses</taxon>
        <taxon>Duplodnaviria</taxon>
        <taxon>Heunggongvirae</taxon>
        <taxon>Peploviricota</taxon>
        <taxon>Herviviricetes</taxon>
        <taxon>Herpesvirales</taxon>
        <taxon>Alloherpesviridae</taxon>
        <taxon>Ictavirus</taxon>
        <taxon>Ictavirus ictaluridallo1</taxon>
        <taxon>Ictalurid herpesvirus 1</taxon>
    </lineage>
</organism>
<gene>
    <name type="primary">ORF50</name>
</gene>
<sequence length="670" mass="64117">MELLVVTLTCLGMSLLASNLALVGVVRSYTNETPTPGPETELITTTVARMTDPTAKPSDFPGDAVTGTQPVPREPSSLPRTTPSLAHTTISKMISLGTRPRPTIPGVPTTIPNTDAPVDPGSVHTTARVVTDITTKQTPTTPATPAGANDTANITTATPAGANDTANITTATPAGANDTANITTATPAGANDTAVTTTSATPAGANDTAVTTTPATPAGANDTANGTVVTTTPAMPAGANDTANGTAVTTTPAMPAGANDTANITTATPTGANDTANVTMPAGATDTVVTTTPAMPTGANDTANITTATPAGANDTANVTMPAGATDTVVTTTPAMPAGANDTANVTKPAGSTDTVVTTTPAMPTGATDTVVTTTPAMPTGATDTVVTTTPAMPTGATDTVVTTTPAKPAGANGTVVTTTPAMPAGANDTVVTTAPATPAGANDTANVTKPTGATDTVVTTATVKPTGATGTVTTTTAKPTGANDTANVTKPTGATGTVTTTTAKPTGATGTVTVATAKPTGATGTVTTTTAKPTGANGTVTTTTAKPTGATGTVTTTTAKPTGANGTVTTTTAKPAGANGTVTTTTAKPAGANGTVTTTTAKPAGANGTVTTTTAKPAGANGTVTTTTAKPAGAGHGHGHGHGHGHGHGHGHGGRGPPGGHKPKSGARR</sequence>
<accession>Q00130</accession>
<evidence type="ECO:0000256" key="1">
    <source>
        <dbReference type="SAM" id="MobiDB-lite"/>
    </source>
</evidence>
<name>VG50_ICHVA</name>
<organismHost>
    <name type="scientific">Ictaluridae</name>
    <name type="common">bullhead catfishes</name>
    <dbReference type="NCBI Taxonomy" id="7996"/>
</organismHost>
<keyword id="KW-1185">Reference proteome</keyword>
<keyword id="KW-0677">Repeat</keyword>
<dbReference type="EMBL" id="M75136">
    <property type="protein sequence ID" value="AAA88153.2"/>
    <property type="molecule type" value="Genomic_DNA"/>
</dbReference>
<dbReference type="PIR" id="F36791">
    <property type="entry name" value="F36791"/>
</dbReference>
<dbReference type="RefSeq" id="NP_041141.2">
    <property type="nucleotide sequence ID" value="NC_001493.2"/>
</dbReference>
<dbReference type="GeneID" id="1488442"/>
<dbReference type="KEGG" id="vg:1488442"/>
<dbReference type="Proteomes" id="UP000007643">
    <property type="component" value="Segment"/>
</dbReference>
<proteinExistence type="predicted"/>